<feature type="transit peptide" description="Mitochondrion" evidence="2">
    <location>
        <begin position="1"/>
        <end position="41"/>
    </location>
</feature>
<feature type="chain" id="PRO_0000406646" description="MICOS complex subunit mic60">
    <location>
        <begin position="42"/>
        <end position="624"/>
    </location>
</feature>
<feature type="topological domain" description="Mitochondrial matrix" evidence="2">
    <location>
        <begin position="42"/>
        <end position="96"/>
    </location>
</feature>
<feature type="transmembrane region" description="Helical" evidence="2">
    <location>
        <begin position="97"/>
        <end position="117"/>
    </location>
</feature>
<feature type="topological domain" description="Mitochondrial intermembrane" evidence="2">
    <location>
        <begin position="118"/>
        <end position="624"/>
    </location>
</feature>
<feature type="region of interest" description="Disordered" evidence="3">
    <location>
        <begin position="42"/>
        <end position="89"/>
    </location>
</feature>
<feature type="region of interest" description="Disordered" evidence="3">
    <location>
        <begin position="180"/>
        <end position="249"/>
    </location>
</feature>
<feature type="coiled-coil region" evidence="2">
    <location>
        <begin position="295"/>
        <end position="440"/>
    </location>
</feature>
<feature type="compositionally biased region" description="Low complexity" evidence="3">
    <location>
        <begin position="46"/>
        <end position="65"/>
    </location>
</feature>
<feature type="compositionally biased region" description="Pro residues" evidence="3">
    <location>
        <begin position="66"/>
        <end position="87"/>
    </location>
</feature>
<feature type="compositionally biased region" description="Basic and acidic residues" evidence="3">
    <location>
        <begin position="212"/>
        <end position="246"/>
    </location>
</feature>
<protein>
    <recommendedName>
        <fullName>MICOS complex subunit mic60</fullName>
    </recommendedName>
    <alternativeName>
        <fullName>Mitofilin</fullName>
    </alternativeName>
</protein>
<dbReference type="EMBL" id="AAHF01000005">
    <property type="protein sequence ID" value="EAL89985.1"/>
    <property type="molecule type" value="Genomic_DNA"/>
</dbReference>
<dbReference type="RefSeq" id="XP_752023.1">
    <property type="nucleotide sequence ID" value="XM_746930.1"/>
</dbReference>
<dbReference type="SMR" id="Q4WP49"/>
<dbReference type="FunCoup" id="Q4WP49">
    <property type="interactions" value="183"/>
</dbReference>
<dbReference type="STRING" id="330879.Q4WP49"/>
<dbReference type="EnsemblFungi" id="EAL89985">
    <property type="protein sequence ID" value="EAL89985"/>
    <property type="gene ID" value="AFUA_4G08030"/>
</dbReference>
<dbReference type="GeneID" id="3508926"/>
<dbReference type="KEGG" id="afm:AFUA_4G08030"/>
<dbReference type="eggNOG" id="KOG1854">
    <property type="taxonomic scope" value="Eukaryota"/>
</dbReference>
<dbReference type="HOGENOM" id="CLU_008024_1_2_1"/>
<dbReference type="InParanoid" id="Q4WP49"/>
<dbReference type="OMA" id="RLDHQMQ"/>
<dbReference type="OrthoDB" id="10261039at2759"/>
<dbReference type="Proteomes" id="UP000002530">
    <property type="component" value="Chromosome 4"/>
</dbReference>
<dbReference type="GO" id="GO:0061617">
    <property type="term" value="C:MICOS complex"/>
    <property type="evidence" value="ECO:0000318"/>
    <property type="project" value="GO_Central"/>
</dbReference>
<dbReference type="GO" id="GO:0042407">
    <property type="term" value="P:cristae formation"/>
    <property type="evidence" value="ECO:0000318"/>
    <property type="project" value="GO_Central"/>
</dbReference>
<dbReference type="InterPro" id="IPR019133">
    <property type="entry name" value="MIC60"/>
</dbReference>
<dbReference type="PANTHER" id="PTHR15415:SF7">
    <property type="entry name" value="MICOS COMPLEX SUBUNIT MIC60"/>
    <property type="match status" value="1"/>
</dbReference>
<dbReference type="PANTHER" id="PTHR15415">
    <property type="entry name" value="MITOFILIN"/>
    <property type="match status" value="1"/>
</dbReference>
<dbReference type="Pfam" id="PF09731">
    <property type="entry name" value="Mitofilin"/>
    <property type="match status" value="2"/>
</dbReference>
<proteinExistence type="inferred from homology"/>
<accession>Q4WP49</accession>
<evidence type="ECO:0000250" key="1"/>
<evidence type="ECO:0000255" key="2"/>
<evidence type="ECO:0000256" key="3">
    <source>
        <dbReference type="SAM" id="MobiDB-lite"/>
    </source>
</evidence>
<evidence type="ECO:0000305" key="4"/>
<sequence length="624" mass="69525">MLRSSFTQSRQLLLSQARSRTAAQWLPKAGASNRLAGQRFFADAKPPVTGAPTPASPSSESSIPPETVPKPSPAAEAPLPPPPPPAPARKTGRFRKFLLYLILTSGFAYGGGIFLALKSDNFHDFFTEYVPYGEDCVLYFEERDFYRRFPNTLRNQNRAPKDEGHTVTIPSKSGLSWKVAEEESGADVSQKGPHMSALDNGDKAQLKPGAAKPEEKVATVEKVKAESAAKEQTAEDKKKVKEEPKKPAAPAVTPIEFATVSEGDEEVVQELVKTFNDIITVIGADENAHKFSGAVNKAKEELRTIGEKIIAIRNEARKAAQEEIKQAHATFDESARELIRRFEEARAHDAAQYREEFEAERERLARAYQEKVNTELQRAQEVAEQRLKNELVEQAIELNRKYLHEVKDLVEREREGRLSKLNELTANVNLLEKLTTDWKEVIDTNLKTQQLQVAVDAVRSVLERSTVPRPFVRELVAVKELAAGDPVVEAAIASINPTAYQRGIPSTSQIIERFRRVADEVRKASLLPEDAGIASHAASLVLSKVMFKKDAVAGSDDVESVLLRTEHLLEEGNLDDAAREMNTLKGWAKILSKDWLSDVRRVLEVKQALEVRLGPFTSLFHLYR</sequence>
<gene>
    <name type="primary">mic60</name>
    <name type="ORF">AFUA_4G08030</name>
</gene>
<organism>
    <name type="scientific">Aspergillus fumigatus (strain ATCC MYA-4609 / CBS 101355 / FGSC A1100 / Af293)</name>
    <name type="common">Neosartorya fumigata</name>
    <dbReference type="NCBI Taxonomy" id="330879"/>
    <lineage>
        <taxon>Eukaryota</taxon>
        <taxon>Fungi</taxon>
        <taxon>Dikarya</taxon>
        <taxon>Ascomycota</taxon>
        <taxon>Pezizomycotina</taxon>
        <taxon>Eurotiomycetes</taxon>
        <taxon>Eurotiomycetidae</taxon>
        <taxon>Eurotiales</taxon>
        <taxon>Aspergillaceae</taxon>
        <taxon>Aspergillus</taxon>
        <taxon>Aspergillus subgen. Fumigati</taxon>
    </lineage>
</organism>
<comment type="function">
    <text evidence="1">Component of the MICOS complex, a large protein complex of the mitochondrial inner membrane that plays crucial roles in the maintenance of crista junctions, inner membrane architecture, and formation of contact sites to the outer membrane. Plays a role in keeping cristae membranes connected to the inner boundary membrane. Also promotes protein import via the mitochondrial intermembrane space assembly (MIA) pathway (By similarity).</text>
</comment>
<comment type="subunit">
    <text evidence="1">Component of the mitochondrial contact site and cristae organizing system (MICOS) complex.</text>
</comment>
<comment type="subcellular location">
    <subcellularLocation>
        <location evidence="1">Mitochondrion inner membrane</location>
        <topology evidence="1">Single-pass membrane protein</topology>
    </subcellularLocation>
</comment>
<comment type="similarity">
    <text evidence="4">Belongs to the MICOS complex subunit Mic60 family.</text>
</comment>
<name>MIC60_ASPFU</name>
<reference key="1">
    <citation type="journal article" date="2005" name="Nature">
        <title>Genomic sequence of the pathogenic and allergenic filamentous fungus Aspergillus fumigatus.</title>
        <authorList>
            <person name="Nierman W.C."/>
            <person name="Pain A."/>
            <person name="Anderson M.J."/>
            <person name="Wortman J.R."/>
            <person name="Kim H.S."/>
            <person name="Arroyo J."/>
            <person name="Berriman M."/>
            <person name="Abe K."/>
            <person name="Archer D.B."/>
            <person name="Bermejo C."/>
            <person name="Bennett J.W."/>
            <person name="Bowyer P."/>
            <person name="Chen D."/>
            <person name="Collins M."/>
            <person name="Coulsen R."/>
            <person name="Davies R."/>
            <person name="Dyer P.S."/>
            <person name="Farman M.L."/>
            <person name="Fedorova N."/>
            <person name="Fedorova N.D."/>
            <person name="Feldblyum T.V."/>
            <person name="Fischer R."/>
            <person name="Fosker N."/>
            <person name="Fraser A."/>
            <person name="Garcia J.L."/>
            <person name="Garcia M.J."/>
            <person name="Goble A."/>
            <person name="Goldman G.H."/>
            <person name="Gomi K."/>
            <person name="Griffith-Jones S."/>
            <person name="Gwilliam R."/>
            <person name="Haas B.J."/>
            <person name="Haas H."/>
            <person name="Harris D.E."/>
            <person name="Horiuchi H."/>
            <person name="Huang J."/>
            <person name="Humphray S."/>
            <person name="Jimenez J."/>
            <person name="Keller N."/>
            <person name="Khouri H."/>
            <person name="Kitamoto K."/>
            <person name="Kobayashi T."/>
            <person name="Konzack S."/>
            <person name="Kulkarni R."/>
            <person name="Kumagai T."/>
            <person name="Lafton A."/>
            <person name="Latge J.-P."/>
            <person name="Li W."/>
            <person name="Lord A."/>
            <person name="Lu C."/>
            <person name="Majoros W.H."/>
            <person name="May G.S."/>
            <person name="Miller B.L."/>
            <person name="Mohamoud Y."/>
            <person name="Molina M."/>
            <person name="Monod M."/>
            <person name="Mouyna I."/>
            <person name="Mulligan S."/>
            <person name="Murphy L.D."/>
            <person name="O'Neil S."/>
            <person name="Paulsen I."/>
            <person name="Penalva M.A."/>
            <person name="Pertea M."/>
            <person name="Price C."/>
            <person name="Pritchard B.L."/>
            <person name="Quail M.A."/>
            <person name="Rabbinowitsch E."/>
            <person name="Rawlins N."/>
            <person name="Rajandream M.A."/>
            <person name="Reichard U."/>
            <person name="Renauld H."/>
            <person name="Robson G.D."/>
            <person name="Rodriguez de Cordoba S."/>
            <person name="Rodriguez-Pena J.M."/>
            <person name="Ronning C.M."/>
            <person name="Rutter S."/>
            <person name="Salzberg S.L."/>
            <person name="Sanchez M."/>
            <person name="Sanchez-Ferrero J.C."/>
            <person name="Saunders D."/>
            <person name="Seeger K."/>
            <person name="Squares R."/>
            <person name="Squares S."/>
            <person name="Takeuchi M."/>
            <person name="Tekaia F."/>
            <person name="Turner G."/>
            <person name="Vazquez de Aldana C.R."/>
            <person name="Weidman J."/>
            <person name="White O."/>
            <person name="Woodward J.R."/>
            <person name="Yu J.-H."/>
            <person name="Fraser C.M."/>
            <person name="Galagan J.E."/>
            <person name="Asai K."/>
            <person name="Machida M."/>
            <person name="Hall N."/>
            <person name="Barrell B.G."/>
            <person name="Denning D.W."/>
        </authorList>
    </citation>
    <scope>NUCLEOTIDE SEQUENCE [LARGE SCALE GENOMIC DNA]</scope>
    <source>
        <strain>ATCC MYA-4609 / CBS 101355 / FGSC A1100 / Af293</strain>
    </source>
</reference>
<keyword id="KW-0175">Coiled coil</keyword>
<keyword id="KW-0472">Membrane</keyword>
<keyword id="KW-0496">Mitochondrion</keyword>
<keyword id="KW-0999">Mitochondrion inner membrane</keyword>
<keyword id="KW-1185">Reference proteome</keyword>
<keyword id="KW-0809">Transit peptide</keyword>
<keyword id="KW-0812">Transmembrane</keyword>
<keyword id="KW-1133">Transmembrane helix</keyword>